<protein>
    <recommendedName>
        <fullName evidence="1">Bifunctional protein GlmU</fullName>
    </recommendedName>
    <domain>
        <recommendedName>
            <fullName evidence="1">UDP-N-acetylglucosamine pyrophosphorylase</fullName>
            <ecNumber evidence="1">2.7.7.23</ecNumber>
        </recommendedName>
        <alternativeName>
            <fullName evidence="1">N-acetylglucosamine-1-phosphate uridyltransferase</fullName>
        </alternativeName>
    </domain>
    <domain>
        <recommendedName>
            <fullName evidence="1">Glucosamine-1-phosphate N-acetyltransferase</fullName>
            <ecNumber evidence="1">2.3.1.157</ecNumber>
        </recommendedName>
    </domain>
</protein>
<name>GLMU_SHEWM</name>
<organism>
    <name type="scientific">Shewanella woodyi (strain ATCC 51908 / MS32)</name>
    <dbReference type="NCBI Taxonomy" id="392500"/>
    <lineage>
        <taxon>Bacteria</taxon>
        <taxon>Pseudomonadati</taxon>
        <taxon>Pseudomonadota</taxon>
        <taxon>Gammaproteobacteria</taxon>
        <taxon>Alteromonadales</taxon>
        <taxon>Shewanellaceae</taxon>
        <taxon>Shewanella</taxon>
    </lineage>
</organism>
<sequence>MALNVVILAAGKGTRMRSDLPKVLHPIAHKSMVQHVIDTAHNVGSDAIQLVYGYGGEKLQSVLGEQQLNWVLQAEQLGTGHAVAQANSNIADDDTVLILYGDVPLIQASTLEALLAAREENGLAILTVNLPNPTGYGRIVREANKVVGIIEQKDANAEQLAINEINTGIMAAPGKQLKAWLGQLSSNNAQGEYYLTDIVAMAHRDGVAITTAQPDSAIEVEGANNRVQLAQLERAYQARAAEKLMLEGANLRDPARIDIRGEVSVGMDVMIDVNVIMQGKVTIGNNVTIGAGAILIDCEISDNAEIKPYSIVESAKVGAEASAGPFARLRPGAELKRDAHIGNFVEMKKAVLGEGSKAGHLAYIGDAQIGSGVNIGAGTITCNYDGANKHLTVIEDNVFVGSDTQLVAPVTIGKGATLGAGSTITKDVAADELVITRVKQRHLTGWPRPVKLKK</sequence>
<accession>B1KQ31</accession>
<gene>
    <name evidence="1" type="primary">glmU</name>
    <name type="ordered locus">Swoo_4895</name>
</gene>
<dbReference type="EC" id="2.7.7.23" evidence="1"/>
<dbReference type="EC" id="2.3.1.157" evidence="1"/>
<dbReference type="EMBL" id="CP000961">
    <property type="protein sequence ID" value="ACA89144.1"/>
    <property type="molecule type" value="Genomic_DNA"/>
</dbReference>
<dbReference type="RefSeq" id="WP_012327461.1">
    <property type="nucleotide sequence ID" value="NC_010506.1"/>
</dbReference>
<dbReference type="SMR" id="B1KQ31"/>
<dbReference type="STRING" id="392500.Swoo_4895"/>
<dbReference type="KEGG" id="swd:Swoo_4895"/>
<dbReference type="eggNOG" id="COG1207">
    <property type="taxonomic scope" value="Bacteria"/>
</dbReference>
<dbReference type="HOGENOM" id="CLU_029499_15_2_6"/>
<dbReference type="UniPathway" id="UPA00113">
    <property type="reaction ID" value="UER00532"/>
</dbReference>
<dbReference type="UniPathway" id="UPA00113">
    <property type="reaction ID" value="UER00533"/>
</dbReference>
<dbReference type="UniPathway" id="UPA00973"/>
<dbReference type="Proteomes" id="UP000002168">
    <property type="component" value="Chromosome"/>
</dbReference>
<dbReference type="GO" id="GO:0005737">
    <property type="term" value="C:cytoplasm"/>
    <property type="evidence" value="ECO:0007669"/>
    <property type="project" value="UniProtKB-SubCell"/>
</dbReference>
<dbReference type="GO" id="GO:0016020">
    <property type="term" value="C:membrane"/>
    <property type="evidence" value="ECO:0007669"/>
    <property type="project" value="GOC"/>
</dbReference>
<dbReference type="GO" id="GO:0019134">
    <property type="term" value="F:glucosamine-1-phosphate N-acetyltransferase activity"/>
    <property type="evidence" value="ECO:0007669"/>
    <property type="project" value="UniProtKB-UniRule"/>
</dbReference>
<dbReference type="GO" id="GO:0000287">
    <property type="term" value="F:magnesium ion binding"/>
    <property type="evidence" value="ECO:0007669"/>
    <property type="project" value="UniProtKB-UniRule"/>
</dbReference>
<dbReference type="GO" id="GO:0003977">
    <property type="term" value="F:UDP-N-acetylglucosamine diphosphorylase activity"/>
    <property type="evidence" value="ECO:0007669"/>
    <property type="project" value="UniProtKB-UniRule"/>
</dbReference>
<dbReference type="GO" id="GO:0000902">
    <property type="term" value="P:cell morphogenesis"/>
    <property type="evidence" value="ECO:0007669"/>
    <property type="project" value="UniProtKB-UniRule"/>
</dbReference>
<dbReference type="GO" id="GO:0071555">
    <property type="term" value="P:cell wall organization"/>
    <property type="evidence" value="ECO:0007669"/>
    <property type="project" value="UniProtKB-KW"/>
</dbReference>
<dbReference type="GO" id="GO:0009245">
    <property type="term" value="P:lipid A biosynthetic process"/>
    <property type="evidence" value="ECO:0007669"/>
    <property type="project" value="UniProtKB-UniRule"/>
</dbReference>
<dbReference type="GO" id="GO:0009252">
    <property type="term" value="P:peptidoglycan biosynthetic process"/>
    <property type="evidence" value="ECO:0007669"/>
    <property type="project" value="UniProtKB-UniRule"/>
</dbReference>
<dbReference type="GO" id="GO:0008360">
    <property type="term" value="P:regulation of cell shape"/>
    <property type="evidence" value="ECO:0007669"/>
    <property type="project" value="UniProtKB-KW"/>
</dbReference>
<dbReference type="GO" id="GO:0006048">
    <property type="term" value="P:UDP-N-acetylglucosamine biosynthetic process"/>
    <property type="evidence" value="ECO:0007669"/>
    <property type="project" value="UniProtKB-UniPathway"/>
</dbReference>
<dbReference type="CDD" id="cd02540">
    <property type="entry name" value="GT2_GlmU_N_bac"/>
    <property type="match status" value="1"/>
</dbReference>
<dbReference type="CDD" id="cd03353">
    <property type="entry name" value="LbH_GlmU_C"/>
    <property type="match status" value="1"/>
</dbReference>
<dbReference type="Gene3D" id="2.160.10.10">
    <property type="entry name" value="Hexapeptide repeat proteins"/>
    <property type="match status" value="1"/>
</dbReference>
<dbReference type="Gene3D" id="3.90.550.10">
    <property type="entry name" value="Spore Coat Polysaccharide Biosynthesis Protein SpsA, Chain A"/>
    <property type="match status" value="1"/>
</dbReference>
<dbReference type="HAMAP" id="MF_01631">
    <property type="entry name" value="GlmU"/>
    <property type="match status" value="1"/>
</dbReference>
<dbReference type="InterPro" id="IPR005882">
    <property type="entry name" value="Bifunctional_GlmU"/>
</dbReference>
<dbReference type="InterPro" id="IPR050065">
    <property type="entry name" value="GlmU-like"/>
</dbReference>
<dbReference type="InterPro" id="IPR038009">
    <property type="entry name" value="GlmU_C_LbH"/>
</dbReference>
<dbReference type="InterPro" id="IPR001451">
    <property type="entry name" value="Hexapep"/>
</dbReference>
<dbReference type="InterPro" id="IPR018357">
    <property type="entry name" value="Hexapep_transf_CS"/>
</dbReference>
<dbReference type="InterPro" id="IPR025877">
    <property type="entry name" value="MobA-like_NTP_Trfase"/>
</dbReference>
<dbReference type="InterPro" id="IPR029044">
    <property type="entry name" value="Nucleotide-diphossugar_trans"/>
</dbReference>
<dbReference type="InterPro" id="IPR011004">
    <property type="entry name" value="Trimer_LpxA-like_sf"/>
</dbReference>
<dbReference type="NCBIfam" id="TIGR01173">
    <property type="entry name" value="glmU"/>
    <property type="match status" value="1"/>
</dbReference>
<dbReference type="NCBIfam" id="NF006986">
    <property type="entry name" value="PRK09451.1"/>
    <property type="match status" value="1"/>
</dbReference>
<dbReference type="PANTHER" id="PTHR43584:SF3">
    <property type="entry name" value="BIFUNCTIONAL PROTEIN GLMU"/>
    <property type="match status" value="1"/>
</dbReference>
<dbReference type="PANTHER" id="PTHR43584">
    <property type="entry name" value="NUCLEOTIDYL TRANSFERASE"/>
    <property type="match status" value="1"/>
</dbReference>
<dbReference type="Pfam" id="PF00132">
    <property type="entry name" value="Hexapep"/>
    <property type="match status" value="1"/>
</dbReference>
<dbReference type="Pfam" id="PF12804">
    <property type="entry name" value="NTP_transf_3"/>
    <property type="match status" value="1"/>
</dbReference>
<dbReference type="SUPFAM" id="SSF53448">
    <property type="entry name" value="Nucleotide-diphospho-sugar transferases"/>
    <property type="match status" value="1"/>
</dbReference>
<dbReference type="SUPFAM" id="SSF51161">
    <property type="entry name" value="Trimeric LpxA-like enzymes"/>
    <property type="match status" value="1"/>
</dbReference>
<dbReference type="PROSITE" id="PS00101">
    <property type="entry name" value="HEXAPEP_TRANSFERASES"/>
    <property type="match status" value="1"/>
</dbReference>
<reference key="1">
    <citation type="submission" date="2008-02" db="EMBL/GenBank/DDBJ databases">
        <title>Complete sequence of Shewanella woodyi ATCC 51908.</title>
        <authorList>
            <consortium name="US DOE Joint Genome Institute"/>
            <person name="Copeland A."/>
            <person name="Lucas S."/>
            <person name="Lapidus A."/>
            <person name="Glavina del Rio T."/>
            <person name="Dalin E."/>
            <person name="Tice H."/>
            <person name="Bruce D."/>
            <person name="Goodwin L."/>
            <person name="Pitluck S."/>
            <person name="Sims D."/>
            <person name="Brettin T."/>
            <person name="Detter J.C."/>
            <person name="Han C."/>
            <person name="Kuske C.R."/>
            <person name="Schmutz J."/>
            <person name="Larimer F."/>
            <person name="Land M."/>
            <person name="Hauser L."/>
            <person name="Kyrpides N."/>
            <person name="Lykidis A."/>
            <person name="Zhao J.-S."/>
            <person name="Richardson P."/>
        </authorList>
    </citation>
    <scope>NUCLEOTIDE SEQUENCE [LARGE SCALE GENOMIC DNA]</scope>
    <source>
        <strain>ATCC 51908 / MS32</strain>
    </source>
</reference>
<feature type="chain" id="PRO_1000186490" description="Bifunctional protein GlmU">
    <location>
        <begin position="1"/>
        <end position="454"/>
    </location>
</feature>
<feature type="region of interest" description="Pyrophosphorylase" evidence="1">
    <location>
        <begin position="1"/>
        <end position="226"/>
    </location>
</feature>
<feature type="region of interest" description="Linker" evidence="1">
    <location>
        <begin position="227"/>
        <end position="247"/>
    </location>
</feature>
<feature type="region of interest" description="N-acetyltransferase" evidence="1">
    <location>
        <begin position="248"/>
        <end position="454"/>
    </location>
</feature>
<feature type="active site" description="Proton acceptor" evidence="1">
    <location>
        <position position="360"/>
    </location>
</feature>
<feature type="binding site" evidence="1">
    <location>
        <begin position="8"/>
        <end position="11"/>
    </location>
    <ligand>
        <name>UDP-N-acetyl-alpha-D-glucosamine</name>
        <dbReference type="ChEBI" id="CHEBI:57705"/>
    </ligand>
</feature>
<feature type="binding site" evidence="1">
    <location>
        <position position="22"/>
    </location>
    <ligand>
        <name>UDP-N-acetyl-alpha-D-glucosamine</name>
        <dbReference type="ChEBI" id="CHEBI:57705"/>
    </ligand>
</feature>
<feature type="binding site" evidence="1">
    <location>
        <position position="73"/>
    </location>
    <ligand>
        <name>UDP-N-acetyl-alpha-D-glucosamine</name>
        <dbReference type="ChEBI" id="CHEBI:57705"/>
    </ligand>
</feature>
<feature type="binding site" evidence="1">
    <location>
        <begin position="78"/>
        <end position="79"/>
    </location>
    <ligand>
        <name>UDP-N-acetyl-alpha-D-glucosamine</name>
        <dbReference type="ChEBI" id="CHEBI:57705"/>
    </ligand>
</feature>
<feature type="binding site" evidence="1">
    <location>
        <begin position="100"/>
        <end position="102"/>
    </location>
    <ligand>
        <name>UDP-N-acetyl-alpha-D-glucosamine</name>
        <dbReference type="ChEBI" id="CHEBI:57705"/>
    </ligand>
</feature>
<feature type="binding site" evidence="1">
    <location>
        <position position="102"/>
    </location>
    <ligand>
        <name>Mg(2+)</name>
        <dbReference type="ChEBI" id="CHEBI:18420"/>
    </ligand>
</feature>
<feature type="binding site" evidence="1">
    <location>
        <position position="137"/>
    </location>
    <ligand>
        <name>UDP-N-acetyl-alpha-D-glucosamine</name>
        <dbReference type="ChEBI" id="CHEBI:57705"/>
    </ligand>
</feature>
<feature type="binding site" evidence="1">
    <location>
        <position position="151"/>
    </location>
    <ligand>
        <name>UDP-N-acetyl-alpha-D-glucosamine</name>
        <dbReference type="ChEBI" id="CHEBI:57705"/>
    </ligand>
</feature>
<feature type="binding site" evidence="1">
    <location>
        <position position="166"/>
    </location>
    <ligand>
        <name>UDP-N-acetyl-alpha-D-glucosamine</name>
        <dbReference type="ChEBI" id="CHEBI:57705"/>
    </ligand>
</feature>
<feature type="binding site" evidence="1">
    <location>
        <position position="224"/>
    </location>
    <ligand>
        <name>Mg(2+)</name>
        <dbReference type="ChEBI" id="CHEBI:18420"/>
    </ligand>
</feature>
<feature type="binding site" evidence="1">
    <location>
        <position position="224"/>
    </location>
    <ligand>
        <name>UDP-N-acetyl-alpha-D-glucosamine</name>
        <dbReference type="ChEBI" id="CHEBI:57705"/>
    </ligand>
</feature>
<feature type="binding site" evidence="1">
    <location>
        <position position="330"/>
    </location>
    <ligand>
        <name>UDP-N-acetyl-alpha-D-glucosamine</name>
        <dbReference type="ChEBI" id="CHEBI:57705"/>
    </ligand>
</feature>
<feature type="binding site" evidence="1">
    <location>
        <position position="348"/>
    </location>
    <ligand>
        <name>UDP-N-acetyl-alpha-D-glucosamine</name>
        <dbReference type="ChEBI" id="CHEBI:57705"/>
    </ligand>
</feature>
<feature type="binding site" evidence="1">
    <location>
        <position position="363"/>
    </location>
    <ligand>
        <name>UDP-N-acetyl-alpha-D-glucosamine</name>
        <dbReference type="ChEBI" id="CHEBI:57705"/>
    </ligand>
</feature>
<feature type="binding site" evidence="1">
    <location>
        <position position="374"/>
    </location>
    <ligand>
        <name>UDP-N-acetyl-alpha-D-glucosamine</name>
        <dbReference type="ChEBI" id="CHEBI:57705"/>
    </ligand>
</feature>
<feature type="binding site" evidence="1">
    <location>
        <position position="377"/>
    </location>
    <ligand>
        <name>acetyl-CoA</name>
        <dbReference type="ChEBI" id="CHEBI:57288"/>
    </ligand>
</feature>
<feature type="binding site" evidence="1">
    <location>
        <begin position="383"/>
        <end position="384"/>
    </location>
    <ligand>
        <name>acetyl-CoA</name>
        <dbReference type="ChEBI" id="CHEBI:57288"/>
    </ligand>
</feature>
<feature type="binding site" evidence="1">
    <location>
        <position position="402"/>
    </location>
    <ligand>
        <name>acetyl-CoA</name>
        <dbReference type="ChEBI" id="CHEBI:57288"/>
    </ligand>
</feature>
<feature type="binding site" evidence="1">
    <location>
        <position position="420"/>
    </location>
    <ligand>
        <name>acetyl-CoA</name>
        <dbReference type="ChEBI" id="CHEBI:57288"/>
    </ligand>
</feature>
<feature type="binding site" evidence="1">
    <location>
        <position position="437"/>
    </location>
    <ligand>
        <name>acetyl-CoA</name>
        <dbReference type="ChEBI" id="CHEBI:57288"/>
    </ligand>
</feature>
<proteinExistence type="inferred from homology"/>
<keyword id="KW-0012">Acyltransferase</keyword>
<keyword id="KW-0133">Cell shape</keyword>
<keyword id="KW-0961">Cell wall biogenesis/degradation</keyword>
<keyword id="KW-0963">Cytoplasm</keyword>
<keyword id="KW-0460">Magnesium</keyword>
<keyword id="KW-0479">Metal-binding</keyword>
<keyword id="KW-0511">Multifunctional enzyme</keyword>
<keyword id="KW-0548">Nucleotidyltransferase</keyword>
<keyword id="KW-0573">Peptidoglycan synthesis</keyword>
<keyword id="KW-1185">Reference proteome</keyword>
<keyword id="KW-0677">Repeat</keyword>
<keyword id="KW-0808">Transferase</keyword>
<evidence type="ECO:0000255" key="1">
    <source>
        <dbReference type="HAMAP-Rule" id="MF_01631"/>
    </source>
</evidence>
<comment type="function">
    <text evidence="1">Catalyzes the last two sequential reactions in the de novo biosynthetic pathway for UDP-N-acetylglucosamine (UDP-GlcNAc). The C-terminal domain catalyzes the transfer of acetyl group from acetyl coenzyme A to glucosamine-1-phosphate (GlcN-1-P) to produce N-acetylglucosamine-1-phosphate (GlcNAc-1-P), which is converted into UDP-GlcNAc by the transfer of uridine 5-monophosphate (from uridine 5-triphosphate), a reaction catalyzed by the N-terminal domain.</text>
</comment>
<comment type="catalytic activity">
    <reaction evidence="1">
        <text>alpha-D-glucosamine 1-phosphate + acetyl-CoA = N-acetyl-alpha-D-glucosamine 1-phosphate + CoA + H(+)</text>
        <dbReference type="Rhea" id="RHEA:13725"/>
        <dbReference type="ChEBI" id="CHEBI:15378"/>
        <dbReference type="ChEBI" id="CHEBI:57287"/>
        <dbReference type="ChEBI" id="CHEBI:57288"/>
        <dbReference type="ChEBI" id="CHEBI:57776"/>
        <dbReference type="ChEBI" id="CHEBI:58516"/>
        <dbReference type="EC" id="2.3.1.157"/>
    </reaction>
</comment>
<comment type="catalytic activity">
    <reaction evidence="1">
        <text>N-acetyl-alpha-D-glucosamine 1-phosphate + UTP + H(+) = UDP-N-acetyl-alpha-D-glucosamine + diphosphate</text>
        <dbReference type="Rhea" id="RHEA:13509"/>
        <dbReference type="ChEBI" id="CHEBI:15378"/>
        <dbReference type="ChEBI" id="CHEBI:33019"/>
        <dbReference type="ChEBI" id="CHEBI:46398"/>
        <dbReference type="ChEBI" id="CHEBI:57705"/>
        <dbReference type="ChEBI" id="CHEBI:57776"/>
        <dbReference type="EC" id="2.7.7.23"/>
    </reaction>
</comment>
<comment type="cofactor">
    <cofactor evidence="1">
        <name>Mg(2+)</name>
        <dbReference type="ChEBI" id="CHEBI:18420"/>
    </cofactor>
    <text evidence="1">Binds 1 Mg(2+) ion per subunit.</text>
</comment>
<comment type="pathway">
    <text evidence="1">Nucleotide-sugar biosynthesis; UDP-N-acetyl-alpha-D-glucosamine biosynthesis; N-acetyl-alpha-D-glucosamine 1-phosphate from alpha-D-glucosamine 6-phosphate (route II): step 2/2.</text>
</comment>
<comment type="pathway">
    <text evidence="1">Nucleotide-sugar biosynthesis; UDP-N-acetyl-alpha-D-glucosamine biosynthesis; UDP-N-acetyl-alpha-D-glucosamine from N-acetyl-alpha-D-glucosamine 1-phosphate: step 1/1.</text>
</comment>
<comment type="pathway">
    <text evidence="1">Bacterial outer membrane biogenesis; LPS lipid A biosynthesis.</text>
</comment>
<comment type="subunit">
    <text evidence="1">Homotrimer.</text>
</comment>
<comment type="subcellular location">
    <subcellularLocation>
        <location evidence="1">Cytoplasm</location>
    </subcellularLocation>
</comment>
<comment type="similarity">
    <text evidence="1">In the N-terminal section; belongs to the N-acetylglucosamine-1-phosphate uridyltransferase family.</text>
</comment>
<comment type="similarity">
    <text evidence="1">In the C-terminal section; belongs to the transferase hexapeptide repeat family.</text>
</comment>